<proteinExistence type="inferred from homology"/>
<evidence type="ECO:0000255" key="1">
    <source>
        <dbReference type="HAMAP-Rule" id="MF_01113"/>
    </source>
</evidence>
<organism>
    <name type="scientific">Legionella pneumophila subsp. pneumophila (strain Philadelphia 1 / ATCC 33152 / DSM 7513)</name>
    <dbReference type="NCBI Taxonomy" id="272624"/>
    <lineage>
        <taxon>Bacteria</taxon>
        <taxon>Pseudomonadati</taxon>
        <taxon>Pseudomonadota</taxon>
        <taxon>Gammaproteobacteria</taxon>
        <taxon>Legionellales</taxon>
        <taxon>Legionellaceae</taxon>
        <taxon>Legionella</taxon>
    </lineage>
</organism>
<reference key="1">
    <citation type="journal article" date="2004" name="Science">
        <title>The genomic sequence of the accidental pathogen Legionella pneumophila.</title>
        <authorList>
            <person name="Chien M."/>
            <person name="Morozova I."/>
            <person name="Shi S."/>
            <person name="Sheng H."/>
            <person name="Chen J."/>
            <person name="Gomez S.M."/>
            <person name="Asamani G."/>
            <person name="Hill K."/>
            <person name="Nuara J."/>
            <person name="Feder M."/>
            <person name="Rineer J."/>
            <person name="Greenberg J.J."/>
            <person name="Steshenko V."/>
            <person name="Park S.H."/>
            <person name="Zhao B."/>
            <person name="Teplitskaya E."/>
            <person name="Edwards J.R."/>
            <person name="Pampou S."/>
            <person name="Georghiou A."/>
            <person name="Chou I.-C."/>
            <person name="Iannuccilli W."/>
            <person name="Ulz M.E."/>
            <person name="Kim D.H."/>
            <person name="Geringer-Sameth A."/>
            <person name="Goldsberry C."/>
            <person name="Morozov P."/>
            <person name="Fischer S.G."/>
            <person name="Segal G."/>
            <person name="Qu X."/>
            <person name="Rzhetsky A."/>
            <person name="Zhang P."/>
            <person name="Cayanis E."/>
            <person name="De Jong P.J."/>
            <person name="Ju J."/>
            <person name="Kalachikov S."/>
            <person name="Shuman H.A."/>
            <person name="Russo J.J."/>
        </authorList>
    </citation>
    <scope>NUCLEOTIDE SEQUENCE [LARGE SCALE GENOMIC DNA]</scope>
    <source>
        <strain>Philadelphia 1 / ATCC 33152 / DSM 7513</strain>
    </source>
</reference>
<feature type="chain" id="PRO_1000137139" description="DNA polymerase IV">
    <location>
        <begin position="1"/>
        <end position="355"/>
    </location>
</feature>
<feature type="domain" description="UmuC" evidence="1">
    <location>
        <begin position="7"/>
        <end position="188"/>
    </location>
</feature>
<feature type="active site" evidence="1">
    <location>
        <position position="107"/>
    </location>
</feature>
<feature type="binding site" evidence="1">
    <location>
        <position position="11"/>
    </location>
    <ligand>
        <name>Mg(2+)</name>
        <dbReference type="ChEBI" id="CHEBI:18420"/>
    </ligand>
</feature>
<feature type="binding site" evidence="1">
    <location>
        <position position="106"/>
    </location>
    <ligand>
        <name>Mg(2+)</name>
        <dbReference type="ChEBI" id="CHEBI:18420"/>
    </ligand>
</feature>
<feature type="site" description="Substrate discrimination" evidence="1">
    <location>
        <position position="16"/>
    </location>
</feature>
<gene>
    <name evidence="1" type="primary">dinB</name>
    <name type="ordered locus">lpg0554</name>
</gene>
<keyword id="KW-0963">Cytoplasm</keyword>
<keyword id="KW-0227">DNA damage</keyword>
<keyword id="KW-0234">DNA repair</keyword>
<keyword id="KW-0235">DNA replication</keyword>
<keyword id="KW-0238">DNA-binding</keyword>
<keyword id="KW-0239">DNA-directed DNA polymerase</keyword>
<keyword id="KW-0460">Magnesium</keyword>
<keyword id="KW-0479">Metal-binding</keyword>
<keyword id="KW-0515">Mutator protein</keyword>
<keyword id="KW-0548">Nucleotidyltransferase</keyword>
<keyword id="KW-1185">Reference proteome</keyword>
<keyword id="KW-0808">Transferase</keyword>
<accession>Q5ZY20</accession>
<protein>
    <recommendedName>
        <fullName evidence="1">DNA polymerase IV</fullName>
        <shortName evidence="1">Pol IV</shortName>
        <ecNumber evidence="1">2.7.7.7</ecNumber>
    </recommendedName>
</protein>
<comment type="function">
    <text evidence="1">Poorly processive, error-prone DNA polymerase involved in untargeted mutagenesis. Copies undamaged DNA at stalled replication forks, which arise in vivo from mismatched or misaligned primer ends. These misaligned primers can be extended by PolIV. Exhibits no 3'-5' exonuclease (proofreading) activity. May be involved in translesional synthesis, in conjunction with the beta clamp from PolIII.</text>
</comment>
<comment type="catalytic activity">
    <reaction evidence="1">
        <text>DNA(n) + a 2'-deoxyribonucleoside 5'-triphosphate = DNA(n+1) + diphosphate</text>
        <dbReference type="Rhea" id="RHEA:22508"/>
        <dbReference type="Rhea" id="RHEA-COMP:17339"/>
        <dbReference type="Rhea" id="RHEA-COMP:17340"/>
        <dbReference type="ChEBI" id="CHEBI:33019"/>
        <dbReference type="ChEBI" id="CHEBI:61560"/>
        <dbReference type="ChEBI" id="CHEBI:173112"/>
        <dbReference type="EC" id="2.7.7.7"/>
    </reaction>
</comment>
<comment type="cofactor">
    <cofactor evidence="1">
        <name>Mg(2+)</name>
        <dbReference type="ChEBI" id="CHEBI:18420"/>
    </cofactor>
    <text evidence="1">Binds 2 magnesium ions per subunit.</text>
</comment>
<comment type="subunit">
    <text evidence="1">Monomer.</text>
</comment>
<comment type="subcellular location">
    <subcellularLocation>
        <location evidence="1">Cytoplasm</location>
    </subcellularLocation>
</comment>
<comment type="similarity">
    <text evidence="1">Belongs to the DNA polymerase type-Y family.</text>
</comment>
<dbReference type="EC" id="2.7.7.7" evidence="1"/>
<dbReference type="EMBL" id="AE017354">
    <property type="protein sequence ID" value="AAU26649.1"/>
    <property type="molecule type" value="Genomic_DNA"/>
</dbReference>
<dbReference type="RefSeq" id="WP_010946300.1">
    <property type="nucleotide sequence ID" value="NC_002942.5"/>
</dbReference>
<dbReference type="RefSeq" id="YP_094596.1">
    <property type="nucleotide sequence ID" value="NC_002942.5"/>
</dbReference>
<dbReference type="SMR" id="Q5ZY20"/>
<dbReference type="STRING" id="272624.lpg0554"/>
<dbReference type="PaxDb" id="272624-lpg0554"/>
<dbReference type="GeneID" id="57034552"/>
<dbReference type="KEGG" id="lpn:lpg0554"/>
<dbReference type="PATRIC" id="fig|272624.6.peg.575"/>
<dbReference type="eggNOG" id="COG0389">
    <property type="taxonomic scope" value="Bacteria"/>
</dbReference>
<dbReference type="HOGENOM" id="CLU_012348_1_2_6"/>
<dbReference type="OrthoDB" id="9808813at2"/>
<dbReference type="Proteomes" id="UP000000609">
    <property type="component" value="Chromosome"/>
</dbReference>
<dbReference type="GO" id="GO:0005829">
    <property type="term" value="C:cytosol"/>
    <property type="evidence" value="ECO:0007669"/>
    <property type="project" value="TreeGrafter"/>
</dbReference>
<dbReference type="GO" id="GO:0003684">
    <property type="term" value="F:damaged DNA binding"/>
    <property type="evidence" value="ECO:0007669"/>
    <property type="project" value="InterPro"/>
</dbReference>
<dbReference type="GO" id="GO:0003887">
    <property type="term" value="F:DNA-directed DNA polymerase activity"/>
    <property type="evidence" value="ECO:0007669"/>
    <property type="project" value="UniProtKB-UniRule"/>
</dbReference>
<dbReference type="GO" id="GO:0000287">
    <property type="term" value="F:magnesium ion binding"/>
    <property type="evidence" value="ECO:0007669"/>
    <property type="project" value="UniProtKB-UniRule"/>
</dbReference>
<dbReference type="GO" id="GO:0006261">
    <property type="term" value="P:DNA-templated DNA replication"/>
    <property type="evidence" value="ECO:0007669"/>
    <property type="project" value="UniProtKB-UniRule"/>
</dbReference>
<dbReference type="GO" id="GO:0042276">
    <property type="term" value="P:error-prone translesion synthesis"/>
    <property type="evidence" value="ECO:0007669"/>
    <property type="project" value="TreeGrafter"/>
</dbReference>
<dbReference type="GO" id="GO:0009432">
    <property type="term" value="P:SOS response"/>
    <property type="evidence" value="ECO:0007669"/>
    <property type="project" value="TreeGrafter"/>
</dbReference>
<dbReference type="CDD" id="cd03586">
    <property type="entry name" value="PolY_Pol_IV_kappa"/>
    <property type="match status" value="1"/>
</dbReference>
<dbReference type="FunFam" id="1.10.150.20:FF:000019">
    <property type="entry name" value="DNA polymerase IV"/>
    <property type="match status" value="1"/>
</dbReference>
<dbReference type="FunFam" id="3.40.1170.60:FF:000001">
    <property type="entry name" value="DNA polymerase IV"/>
    <property type="match status" value="1"/>
</dbReference>
<dbReference type="Gene3D" id="3.30.70.270">
    <property type="match status" value="1"/>
</dbReference>
<dbReference type="Gene3D" id="3.40.1170.60">
    <property type="match status" value="1"/>
</dbReference>
<dbReference type="Gene3D" id="1.10.150.20">
    <property type="entry name" value="5' to 3' exonuclease, C-terminal subdomain"/>
    <property type="match status" value="1"/>
</dbReference>
<dbReference type="Gene3D" id="3.30.1490.100">
    <property type="entry name" value="DNA polymerase, Y-family, little finger domain"/>
    <property type="match status" value="1"/>
</dbReference>
<dbReference type="HAMAP" id="MF_01113">
    <property type="entry name" value="DNApol_IV"/>
    <property type="match status" value="1"/>
</dbReference>
<dbReference type="InterPro" id="IPR043502">
    <property type="entry name" value="DNA/RNA_pol_sf"/>
</dbReference>
<dbReference type="InterPro" id="IPR036775">
    <property type="entry name" value="DNA_pol_Y-fam_lit_finger_sf"/>
</dbReference>
<dbReference type="InterPro" id="IPR017961">
    <property type="entry name" value="DNA_pol_Y-fam_little_finger"/>
</dbReference>
<dbReference type="InterPro" id="IPR050116">
    <property type="entry name" value="DNA_polymerase-Y"/>
</dbReference>
<dbReference type="InterPro" id="IPR022880">
    <property type="entry name" value="DNApol_IV"/>
</dbReference>
<dbReference type="InterPro" id="IPR053848">
    <property type="entry name" value="IMS_HHH_1"/>
</dbReference>
<dbReference type="InterPro" id="IPR043128">
    <property type="entry name" value="Rev_trsase/Diguanyl_cyclase"/>
</dbReference>
<dbReference type="InterPro" id="IPR001126">
    <property type="entry name" value="UmuC"/>
</dbReference>
<dbReference type="NCBIfam" id="NF002677">
    <property type="entry name" value="PRK02406.1"/>
    <property type="match status" value="1"/>
</dbReference>
<dbReference type="PANTHER" id="PTHR11076:SF33">
    <property type="entry name" value="DNA POLYMERASE KAPPA"/>
    <property type="match status" value="1"/>
</dbReference>
<dbReference type="PANTHER" id="PTHR11076">
    <property type="entry name" value="DNA REPAIR POLYMERASE UMUC / TRANSFERASE FAMILY MEMBER"/>
    <property type="match status" value="1"/>
</dbReference>
<dbReference type="Pfam" id="PF00817">
    <property type="entry name" value="IMS"/>
    <property type="match status" value="1"/>
</dbReference>
<dbReference type="Pfam" id="PF11799">
    <property type="entry name" value="IMS_C"/>
    <property type="match status" value="1"/>
</dbReference>
<dbReference type="Pfam" id="PF21999">
    <property type="entry name" value="IMS_HHH_1"/>
    <property type="match status" value="1"/>
</dbReference>
<dbReference type="SUPFAM" id="SSF56672">
    <property type="entry name" value="DNA/RNA polymerases"/>
    <property type="match status" value="1"/>
</dbReference>
<dbReference type="SUPFAM" id="SSF100879">
    <property type="entry name" value="Lesion bypass DNA polymerase (Y-family), little finger domain"/>
    <property type="match status" value="1"/>
</dbReference>
<dbReference type="PROSITE" id="PS50173">
    <property type="entry name" value="UMUC"/>
    <property type="match status" value="1"/>
</dbReference>
<sequence length="355" mass="40374">MNPIRKIIHIDMDCFYAAIEMRDFPELANKPIAVGGDAKRRGVIATCNYAARQFGIRSAMPTAHALKLCRELILRPVRMDVYQKESQYIRSLLTEYTDLIEPLSLDEAYLDVTESTQCQGSATWIAEEIRARIYQARQLTASAGIAPNKSLAKIASDWHKPNGQMVIRPEDVSAFVLDLPVRKLFGVGPKMEEKLRALNIKTCADLQRYSIEYLLQKFGTMGQRLYELARGIDNRPVNPERIRKSISVEETYPKDLPNSEACLAVLPDLMARLEARIQRAGKISGIHNLFVKLKFNDFQQTTIERVMDKLDLIVLRQLIQEGFARRGMPVRLLGIGIKLKQENTYQSVQLPLLDL</sequence>
<name>DPO4_LEGPH</name>